<keyword id="KW-0002">3D-structure</keyword>
<keyword id="KW-1038">Host endoplasmic reticulum</keyword>
<keyword id="KW-1040">Host Golgi apparatus</keyword>
<keyword id="KW-0378">Hydrolase</keyword>
<keyword id="KW-0460">Magnesium</keyword>
<keyword id="KW-0464">Manganese</keyword>
<keyword id="KW-0479">Metal-binding</keyword>
<keyword id="KW-0511">Multifunctional enzyme</keyword>
<keyword id="KW-0547">Nucleotide-binding</keyword>
<keyword id="KW-0548">Nucleotidyltransferase</keyword>
<keyword id="KW-0696">RNA-directed RNA polymerase</keyword>
<keyword id="KW-0808">Transferase</keyword>
<keyword id="KW-0693">Viral RNA replication</keyword>
<keyword id="KW-0946">Virion</keyword>
<keyword id="KW-0862">Zinc</keyword>
<accession>A5HC98</accession>
<name>L_BUNLC</name>
<evidence type="ECO:0000250" key="1">
    <source>
        <dbReference type="UniProtKB" id="A2SZS3"/>
    </source>
</evidence>
<evidence type="ECO:0000250" key="2">
    <source>
        <dbReference type="UniProtKB" id="I0DF35"/>
    </source>
</evidence>
<evidence type="ECO:0000250" key="3">
    <source>
        <dbReference type="UniProtKB" id="P20470"/>
    </source>
</evidence>
<evidence type="ECO:0000250" key="4">
    <source>
        <dbReference type="UniProtKB" id="P27316"/>
    </source>
</evidence>
<evidence type="ECO:0000255" key="5">
    <source>
        <dbReference type="PROSITE-ProRule" id="PRU00539"/>
    </source>
</evidence>
<evidence type="ECO:0000269" key="6">
    <source>
    </source>
</evidence>
<evidence type="ECO:0000269" key="7">
    <source>
    </source>
</evidence>
<evidence type="ECO:0000269" key="8">
    <source>
    </source>
</evidence>
<evidence type="ECO:0000269" key="9">
    <source>
    </source>
</evidence>
<evidence type="ECO:0000303" key="10">
    <source>
    </source>
</evidence>
<evidence type="ECO:0000305" key="11"/>
<evidence type="ECO:0000305" key="12">
    <source>
    </source>
</evidence>
<evidence type="ECO:0007744" key="13">
    <source>
        <dbReference type="PDB" id="2XI5"/>
    </source>
</evidence>
<evidence type="ECO:0007744" key="14">
    <source>
        <dbReference type="PDB" id="2XI7"/>
    </source>
</evidence>
<evidence type="ECO:0007744" key="15">
    <source>
        <dbReference type="PDB" id="5AMQ"/>
    </source>
</evidence>
<evidence type="ECO:0007744" key="16">
    <source>
        <dbReference type="PDB" id="5AMR"/>
    </source>
</evidence>
<evidence type="ECO:0007744" key="17">
    <source>
        <dbReference type="PDB" id="6Z6B"/>
    </source>
</evidence>
<evidence type="ECO:0007744" key="18">
    <source>
        <dbReference type="PDB" id="6Z6G"/>
    </source>
</evidence>
<evidence type="ECO:0007744" key="19">
    <source>
        <dbReference type="PDB" id="6Z8K"/>
    </source>
</evidence>
<evidence type="ECO:0007829" key="20">
    <source>
        <dbReference type="PDB" id="2XI5"/>
    </source>
</evidence>
<evidence type="ECO:0007829" key="21">
    <source>
        <dbReference type="PDB" id="5AMQ"/>
    </source>
</evidence>
<evidence type="ECO:0007829" key="22">
    <source>
        <dbReference type="PDB" id="5AMR"/>
    </source>
</evidence>
<evidence type="ECO:0007829" key="23">
    <source>
        <dbReference type="PDB" id="6Z6G"/>
    </source>
</evidence>
<evidence type="ECO:0007829" key="24">
    <source>
        <dbReference type="PDB" id="6Z8K"/>
    </source>
</evidence>
<evidence type="ECO:0007829" key="25">
    <source>
        <dbReference type="PDB" id="7ORK"/>
    </source>
</evidence>
<evidence type="ECO:0007829" key="26">
    <source>
        <dbReference type="PDB" id="7ORM"/>
    </source>
</evidence>
<evidence type="ECO:0007829" key="27">
    <source>
        <dbReference type="PDB" id="7ORN"/>
    </source>
</evidence>
<evidence type="ECO:0007829" key="28">
    <source>
        <dbReference type="PDB" id="7ORO"/>
    </source>
</evidence>
<proteinExistence type="evidence at protein level"/>
<protein>
    <recommendedName>
        <fullName>RNA-directed RNA polymerase L</fullName>
        <shortName>Protein L</shortName>
        <ecNumber evidence="2">2.7.7.48</ecNumber>
    </recommendedName>
    <alternativeName>
        <fullName>Large structural protein</fullName>
    </alternativeName>
    <alternativeName>
        <fullName>Replicase</fullName>
    </alternativeName>
    <alternativeName>
        <fullName>Transcriptase</fullName>
    </alternativeName>
    <domain>
        <recommendedName>
            <fullName>cap-snatching endonuclease</fullName>
            <ecNumber evidence="6">3.1.-.-</ecNumber>
        </recommendedName>
    </domain>
</protein>
<comment type="function">
    <text evidence="2 4 6 7">RNA-dependent RNA polymerase, which is responsible for the replication and transcription of the viral RNA genome using antigenomic RNA as an intermediate (By similarity). During transcription, synthesizes subgenomic RNAs and assures their capping by a cap-snatching mechanism, which involves the endonuclease activity cleaving the host capped pre-mRNAs (PubMed:20862319). These short capped RNAs are then used as primers for viral transcription. The 3'-end of subgenomic mRNAs molecules are not polyadenylated. During replication, the polymerase binds the 5' and 3' vRNA extremities at distinct sites (By similarity). In turn, significant conformational changes occur in the polymerase and in vRNA to initiate active RNA synthesis (PubMed:26004069). As a consequence of the use of the same enzyme for both transcription and replication, these mechanisms need to be well coordinated (PubMed:20862319).</text>
</comment>
<comment type="catalytic activity">
    <reaction evidence="3">
        <text>RNA(n) + a ribonucleoside 5'-triphosphate = RNA(n+1) + diphosphate</text>
        <dbReference type="Rhea" id="RHEA:21248"/>
        <dbReference type="Rhea" id="RHEA-COMP:14527"/>
        <dbReference type="Rhea" id="RHEA-COMP:17342"/>
        <dbReference type="ChEBI" id="CHEBI:33019"/>
        <dbReference type="ChEBI" id="CHEBI:61557"/>
        <dbReference type="ChEBI" id="CHEBI:140395"/>
        <dbReference type="EC" id="2.7.7.48"/>
    </reaction>
</comment>
<comment type="cofactor">
    <cofactor evidence="6">
        <name>Mn(2+)</name>
        <dbReference type="ChEBI" id="CHEBI:29035"/>
    </cofactor>
    <text evidence="6 8">For endonuclease activity. Binds 2 Mn(2+) ions in the active site (PubMed:20862319). The divalent metal ions are crucial for catalytic activity (PubMed:31948728).</text>
</comment>
<comment type="cofactor">
    <cofactor evidence="1">
        <name>Mg(2+)</name>
        <dbReference type="ChEBI" id="CHEBI:18420"/>
    </cofactor>
    <cofactor evidence="1">
        <name>Mn(2+)</name>
        <dbReference type="ChEBI" id="CHEBI:29035"/>
    </cofactor>
    <text evidence="1">For polymerase activity. Initiation activity is stronger in the presence of Mn(2+) than in the presence of Mg(2+).</text>
</comment>
<comment type="subunit">
    <text evidence="4">Homomultimer (By similarity). Interacts with the glycoprotein N; this interaction allows efficient polymerase packaging into virus particles (By similarity). Interacts with nucleoprotein N (By similarity).</text>
</comment>
<comment type="subcellular location">
    <subcellularLocation>
        <location evidence="2">Host Golgi apparatus</location>
    </subcellularLocation>
    <subcellularLocation>
        <location evidence="2">Host endoplasmic reticulum</location>
    </subcellularLocation>
    <subcellularLocation>
        <location evidence="2">Host endoplasmic reticulum-Golgi intermediate compartment</location>
    </subcellularLocation>
    <subcellularLocation>
        <location evidence="3">Virion</location>
    </subcellularLocation>
</comment>
<comment type="domain">
    <text evidence="1 2 6 9">The N-terminus contains the endonuclease activity (endoN) (PubMed:20862319, PubMed:32681014). The central region contains the RdRp activity (By similarity). The C-terminus contains the cap-binding region (By similarity).</text>
</comment>
<comment type="miscellaneous">
    <text evidence="10">Classified as His(+) endonuclease since it has a histidine upstream of the active site that coordinates the first cation.</text>
</comment>
<comment type="similarity">
    <text evidence="11">Belongs to the Bunyavirales RNA polymerase family.</text>
</comment>
<feature type="chain" id="PRO_0000445739" description="RNA-directed RNA polymerase L">
    <location>
        <begin position="1"/>
        <end position="2263"/>
    </location>
</feature>
<feature type="domain" description="RdRp catalytic" evidence="5">
    <location>
        <begin position="1042"/>
        <end position="1230"/>
    </location>
</feature>
<feature type="region of interest" description="Endonuclease" evidence="9">
    <location>
        <begin position="1"/>
        <end position="185"/>
    </location>
</feature>
<feature type="region of interest" description="Cap-binding" evidence="9">
    <location>
        <begin position="1841"/>
        <end position="1977"/>
    </location>
</feature>
<feature type="binding site" evidence="6">
    <location>
        <position position="34"/>
    </location>
    <ligand>
        <name>Mn(2+)</name>
        <dbReference type="ChEBI" id="CHEBI:29035"/>
        <label>1</label>
    </ligand>
</feature>
<feature type="binding site" evidence="6">
    <location>
        <position position="52"/>
    </location>
    <ligand>
        <name>Mn(2+)</name>
        <dbReference type="ChEBI" id="CHEBI:29035"/>
        <label>2</label>
    </ligand>
</feature>
<feature type="binding site" evidence="6">
    <location>
        <position position="79"/>
    </location>
    <ligand>
        <name>Mn(2+)</name>
        <dbReference type="ChEBI" id="CHEBI:29035"/>
        <label>1</label>
    </ligand>
</feature>
<feature type="binding site" evidence="6">
    <location>
        <position position="79"/>
    </location>
    <ligand>
        <name>Mn(2+)</name>
        <dbReference type="ChEBI" id="CHEBI:29035"/>
        <label>2</label>
    </ligand>
</feature>
<feature type="binding site" evidence="6">
    <location>
        <position position="92"/>
    </location>
    <ligand>
        <name>Mn(2+)</name>
        <dbReference type="ChEBI" id="CHEBI:29035"/>
        <label>1</label>
    </ligand>
</feature>
<feature type="binding site" evidence="6">
    <location>
        <position position="93"/>
    </location>
    <ligand>
        <name>Mn(2+)</name>
        <dbReference type="ChEBI" id="CHEBI:29035"/>
        <label>1</label>
    </ligand>
</feature>
<feature type="binding site" evidence="12">
    <location>
        <position position="1188"/>
    </location>
    <ligand>
        <name>Mg(2+)</name>
        <dbReference type="ChEBI" id="CHEBI:18420"/>
        <note>catalytic; for RdRp activity</note>
    </ligand>
</feature>
<feature type="binding site" evidence="9 17">
    <location>
        <position position="2064"/>
    </location>
    <ligand>
        <name>Zn(2+)</name>
        <dbReference type="ChEBI" id="CHEBI:29105"/>
    </ligand>
</feature>
<feature type="binding site" evidence="9 17">
    <location>
        <position position="2169"/>
    </location>
    <ligand>
        <name>Zn(2+)</name>
        <dbReference type="ChEBI" id="CHEBI:29105"/>
    </ligand>
</feature>
<feature type="binding site" evidence="9 17">
    <location>
        <position position="2178"/>
    </location>
    <ligand>
        <name>Zn(2+)</name>
        <dbReference type="ChEBI" id="CHEBI:29105"/>
    </ligand>
</feature>
<feature type="binding site" evidence="9 17">
    <location>
        <position position="2182"/>
    </location>
    <ligand>
        <name>Zn(2+)</name>
        <dbReference type="ChEBI" id="CHEBI:29105"/>
    </ligand>
</feature>
<feature type="mutagenesis site" description="Complete loss of nuclease activity." evidence="6">
    <original>H</original>
    <variation>A</variation>
    <location>
        <position position="34"/>
    </location>
</feature>
<feature type="mutagenesis site" description="Complete loss of nuclease activity." evidence="6">
    <original>D</original>
    <variation>A</variation>
    <location>
        <position position="52"/>
    </location>
</feature>
<feature type="mutagenesis site" description="Complete loss of nuclease activity." evidence="6">
    <original>D</original>
    <variation>A</variation>
    <location>
        <position position="79"/>
    </location>
</feature>
<feature type="mutagenesis site" description="Complete loss of nuclease activity." evidence="6">
    <original>D</original>
    <variation>A</variation>
    <location>
        <position position="92"/>
    </location>
</feature>
<feature type="mutagenesis site" description="Complete loss of nuclease activity." evidence="6">
    <original>K</original>
    <variation>A</variation>
    <location>
        <position position="94"/>
    </location>
</feature>
<feature type="helix" evidence="20">
    <location>
        <begin position="4"/>
        <end position="15"/>
    </location>
</feature>
<feature type="helix" evidence="20">
    <location>
        <begin position="19"/>
        <end position="45"/>
    </location>
</feature>
<feature type="helix" evidence="20">
    <location>
        <begin position="55"/>
        <end position="62"/>
    </location>
</feature>
<feature type="strand" evidence="27">
    <location>
        <begin position="64"/>
        <end position="66"/>
    </location>
</feature>
<feature type="turn" evidence="20">
    <location>
        <begin position="68"/>
        <end position="70"/>
    </location>
</feature>
<feature type="strand" evidence="20">
    <location>
        <begin position="79"/>
        <end position="84"/>
    </location>
</feature>
<feature type="strand" evidence="20">
    <location>
        <begin position="87"/>
        <end position="95"/>
    </location>
</feature>
<feature type="strand" evidence="20">
    <location>
        <begin position="97"/>
        <end position="99"/>
    </location>
</feature>
<feature type="helix" evidence="20">
    <location>
        <begin position="100"/>
        <end position="120"/>
    </location>
</feature>
<feature type="strand" evidence="20">
    <location>
        <begin position="124"/>
        <end position="131"/>
    </location>
</feature>
<feature type="turn" evidence="20">
    <location>
        <begin position="133"/>
        <end position="135"/>
    </location>
</feature>
<feature type="strand" evidence="20">
    <location>
        <begin position="138"/>
        <end position="140"/>
    </location>
</feature>
<feature type="helix" evidence="20">
    <location>
        <begin position="143"/>
        <end position="148"/>
    </location>
</feature>
<feature type="strand" evidence="20">
    <location>
        <begin position="149"/>
        <end position="151"/>
    </location>
</feature>
<feature type="helix" evidence="20">
    <location>
        <begin position="159"/>
        <end position="172"/>
    </location>
</feature>
<feature type="helix" evidence="20">
    <location>
        <begin position="176"/>
        <end position="179"/>
    </location>
</feature>
<feature type="turn" evidence="27">
    <location>
        <begin position="182"/>
        <end position="184"/>
    </location>
</feature>
<feature type="helix" evidence="22">
    <location>
        <begin position="199"/>
        <end position="203"/>
    </location>
</feature>
<feature type="helix" evidence="22">
    <location>
        <begin position="205"/>
        <end position="212"/>
    </location>
</feature>
<feature type="helix" evidence="22">
    <location>
        <begin position="216"/>
        <end position="227"/>
    </location>
</feature>
<feature type="turn" evidence="22">
    <location>
        <begin position="230"/>
        <end position="232"/>
    </location>
</feature>
<feature type="strand" evidence="22">
    <location>
        <begin position="233"/>
        <end position="235"/>
    </location>
</feature>
<feature type="helix" evidence="22">
    <location>
        <begin position="238"/>
        <end position="246"/>
    </location>
</feature>
<feature type="helix" evidence="22">
    <location>
        <begin position="248"/>
        <end position="259"/>
    </location>
</feature>
<feature type="helix" evidence="22">
    <location>
        <begin position="260"/>
        <end position="264"/>
    </location>
</feature>
<feature type="helix" evidence="22">
    <location>
        <begin position="274"/>
        <end position="291"/>
    </location>
</feature>
<feature type="strand" evidence="22">
    <location>
        <begin position="292"/>
        <end position="295"/>
    </location>
</feature>
<feature type="helix" evidence="22">
    <location>
        <begin position="298"/>
        <end position="300"/>
    </location>
</feature>
<feature type="strand" evidence="22">
    <location>
        <begin position="304"/>
        <end position="306"/>
    </location>
</feature>
<feature type="strand" evidence="27">
    <location>
        <begin position="314"/>
        <end position="316"/>
    </location>
</feature>
<feature type="helix" evidence="22">
    <location>
        <begin position="320"/>
        <end position="332"/>
    </location>
</feature>
<feature type="helix" evidence="22">
    <location>
        <begin position="341"/>
        <end position="350"/>
    </location>
</feature>
<feature type="turn" evidence="25">
    <location>
        <begin position="354"/>
        <end position="356"/>
    </location>
</feature>
<feature type="helix" evidence="22">
    <location>
        <begin position="357"/>
        <end position="371"/>
    </location>
</feature>
<feature type="strand" evidence="22">
    <location>
        <begin position="386"/>
        <end position="388"/>
    </location>
</feature>
<feature type="strand" evidence="22">
    <location>
        <begin position="391"/>
        <end position="395"/>
    </location>
</feature>
<feature type="strand" evidence="22">
    <location>
        <begin position="398"/>
        <end position="400"/>
    </location>
</feature>
<feature type="helix" evidence="22">
    <location>
        <begin position="403"/>
        <end position="405"/>
    </location>
</feature>
<feature type="helix" evidence="22">
    <location>
        <begin position="408"/>
        <end position="416"/>
    </location>
</feature>
<feature type="turn" evidence="22">
    <location>
        <begin position="417"/>
        <end position="419"/>
    </location>
</feature>
<feature type="turn" evidence="27">
    <location>
        <begin position="427"/>
        <end position="429"/>
    </location>
</feature>
<feature type="turn" evidence="27">
    <location>
        <begin position="432"/>
        <end position="434"/>
    </location>
</feature>
<feature type="strand" evidence="22">
    <location>
        <begin position="441"/>
        <end position="443"/>
    </location>
</feature>
<feature type="helix" evidence="22">
    <location>
        <begin position="448"/>
        <end position="465"/>
    </location>
</feature>
<feature type="strand" evidence="22">
    <location>
        <begin position="466"/>
        <end position="468"/>
    </location>
</feature>
<feature type="helix" evidence="22">
    <location>
        <begin position="476"/>
        <end position="488"/>
    </location>
</feature>
<feature type="helix" evidence="22">
    <location>
        <begin position="490"/>
        <end position="500"/>
    </location>
</feature>
<feature type="helix" evidence="22">
    <location>
        <begin position="503"/>
        <end position="522"/>
    </location>
</feature>
<feature type="strand" evidence="22">
    <location>
        <begin position="529"/>
        <end position="533"/>
    </location>
</feature>
<feature type="strand" evidence="22">
    <location>
        <begin position="540"/>
        <end position="544"/>
    </location>
</feature>
<feature type="strand" evidence="22">
    <location>
        <begin position="556"/>
        <end position="567"/>
    </location>
</feature>
<feature type="strand" evidence="22">
    <location>
        <begin position="577"/>
        <end position="583"/>
    </location>
</feature>
<feature type="strand" evidence="22">
    <location>
        <begin position="586"/>
        <end position="591"/>
    </location>
</feature>
<feature type="strand" evidence="22">
    <location>
        <begin position="594"/>
        <end position="597"/>
    </location>
</feature>
<feature type="helix" evidence="22">
    <location>
        <begin position="598"/>
        <end position="619"/>
    </location>
</feature>
<feature type="strand" evidence="21">
    <location>
        <begin position="623"/>
        <end position="625"/>
    </location>
</feature>
<feature type="helix" evidence="22">
    <location>
        <begin position="627"/>
        <end position="639"/>
    </location>
</feature>
<feature type="helix" evidence="22">
    <location>
        <begin position="643"/>
        <end position="659"/>
    </location>
</feature>
<feature type="strand" evidence="22">
    <location>
        <begin position="661"/>
        <end position="663"/>
    </location>
</feature>
<feature type="helix" evidence="22">
    <location>
        <begin position="666"/>
        <end position="672"/>
    </location>
</feature>
<feature type="helix" evidence="22">
    <location>
        <begin position="681"/>
        <end position="699"/>
    </location>
</feature>
<feature type="helix" evidence="22">
    <location>
        <begin position="701"/>
        <end position="704"/>
    </location>
</feature>
<feature type="strand" evidence="27">
    <location>
        <begin position="709"/>
        <end position="711"/>
    </location>
</feature>
<feature type="helix" evidence="22">
    <location>
        <begin position="714"/>
        <end position="721"/>
    </location>
</feature>
<feature type="strand" evidence="22">
    <location>
        <begin position="730"/>
        <end position="736"/>
    </location>
</feature>
<feature type="helix" evidence="22">
    <location>
        <begin position="738"/>
        <end position="746"/>
    </location>
</feature>
<feature type="helix" evidence="22">
    <location>
        <begin position="747"/>
        <end position="750"/>
    </location>
</feature>
<feature type="helix" evidence="22">
    <location>
        <begin position="759"/>
        <end position="780"/>
    </location>
</feature>
<feature type="strand" evidence="24">
    <location>
        <begin position="785"/>
        <end position="788"/>
    </location>
</feature>
<feature type="helix" evidence="22">
    <location>
        <begin position="796"/>
        <end position="812"/>
    </location>
</feature>
<feature type="helix" evidence="22">
    <location>
        <begin position="817"/>
        <end position="824"/>
    </location>
</feature>
<feature type="strand" evidence="22">
    <location>
        <begin position="827"/>
        <end position="830"/>
    </location>
</feature>
<feature type="helix" evidence="22">
    <location>
        <begin position="831"/>
        <end position="833"/>
    </location>
</feature>
<feature type="helix" evidence="22">
    <location>
        <begin position="835"/>
        <end position="837"/>
    </location>
</feature>
<feature type="strand" evidence="22">
    <location>
        <begin position="840"/>
        <end position="847"/>
    </location>
</feature>
<feature type="helix" evidence="22">
    <location>
        <begin position="850"/>
        <end position="869"/>
    </location>
</feature>
<feature type="helix" evidence="27">
    <location>
        <begin position="876"/>
        <end position="878"/>
    </location>
</feature>
<feature type="turn" evidence="27">
    <location>
        <begin position="882"/>
        <end position="885"/>
    </location>
</feature>
<feature type="strand" evidence="27">
    <location>
        <begin position="886"/>
        <end position="888"/>
    </location>
</feature>
<feature type="helix" evidence="22">
    <location>
        <begin position="893"/>
        <end position="899"/>
    </location>
</feature>
<feature type="strand" evidence="22">
    <location>
        <begin position="906"/>
        <end position="910"/>
    </location>
</feature>
<feature type="helix" evidence="22">
    <location>
        <begin position="911"/>
        <end position="920"/>
    </location>
</feature>
<feature type="strand" evidence="22">
    <location>
        <begin position="926"/>
        <end position="928"/>
    </location>
</feature>
<feature type="helix" evidence="22">
    <location>
        <begin position="929"/>
        <end position="939"/>
    </location>
</feature>
<feature type="strand" evidence="22">
    <location>
        <begin position="944"/>
        <end position="947"/>
    </location>
</feature>
<feature type="strand" evidence="27">
    <location>
        <begin position="953"/>
        <end position="956"/>
    </location>
</feature>
<feature type="strand" evidence="22">
    <location>
        <begin position="961"/>
        <end position="964"/>
    </location>
</feature>
<feature type="helix" evidence="22">
    <location>
        <begin position="965"/>
        <end position="984"/>
    </location>
</feature>
<feature type="strand" evidence="22">
    <location>
        <begin position="985"/>
        <end position="988"/>
    </location>
</feature>
<feature type="strand" evidence="27">
    <location>
        <begin position="990"/>
        <end position="992"/>
    </location>
</feature>
<feature type="helix" evidence="22">
    <location>
        <begin position="996"/>
        <end position="1019"/>
    </location>
</feature>
<feature type="helix" evidence="22">
    <location>
        <begin position="1021"/>
        <end position="1029"/>
    </location>
</feature>
<feature type="strand" evidence="21">
    <location>
        <begin position="1035"/>
        <end position="1037"/>
    </location>
</feature>
<feature type="helix" evidence="22">
    <location>
        <begin position="1040"/>
        <end position="1047"/>
    </location>
</feature>
<feature type="strand" evidence="22">
    <location>
        <begin position="1051"/>
        <end position="1063"/>
    </location>
</feature>
<feature type="turn" evidence="22">
    <location>
        <begin position="1064"/>
        <end position="1066"/>
    </location>
</feature>
<feature type="helix" evidence="22">
    <location>
        <begin position="1072"/>
        <end position="1078"/>
    </location>
</feature>
<feature type="helix" evidence="22">
    <location>
        <begin position="1085"/>
        <end position="1098"/>
    </location>
</feature>
<feature type="strand" evidence="22">
    <location>
        <begin position="1102"/>
        <end position="1104"/>
    </location>
</feature>
<feature type="helix" evidence="22">
    <location>
        <begin position="1107"/>
        <end position="1115"/>
    </location>
</feature>
<feature type="helix" evidence="22">
    <location>
        <begin position="1124"/>
        <end position="1127"/>
    </location>
</feature>
<feature type="turn" evidence="22">
    <location>
        <begin position="1128"/>
        <end position="1133"/>
    </location>
</feature>
<feature type="strand" evidence="22">
    <location>
        <begin position="1134"/>
        <end position="1138"/>
    </location>
</feature>
<feature type="turn" evidence="27">
    <location>
        <begin position="1145"/>
        <end position="1148"/>
    </location>
</feature>
<feature type="helix" evidence="22">
    <location>
        <begin position="1149"/>
        <end position="1172"/>
    </location>
</feature>
<feature type="turn" evidence="22">
    <location>
        <begin position="1173"/>
        <end position="1175"/>
    </location>
</feature>
<feature type="strand" evidence="22">
    <location>
        <begin position="1177"/>
        <end position="1185"/>
    </location>
</feature>
<feature type="strand" evidence="22">
    <location>
        <begin position="1188"/>
        <end position="1200"/>
    </location>
</feature>
<feature type="helix" evidence="22">
    <location>
        <begin position="1202"/>
        <end position="1219"/>
    </location>
</feature>
<feature type="turn" evidence="22">
    <location>
        <begin position="1226"/>
        <end position="1228"/>
    </location>
</feature>
<feature type="strand" evidence="22">
    <location>
        <begin position="1230"/>
        <end position="1238"/>
    </location>
</feature>
<feature type="strand" evidence="22">
    <location>
        <begin position="1241"/>
        <end position="1244"/>
    </location>
</feature>
<feature type="strand" evidence="22">
    <location>
        <begin position="1247"/>
        <end position="1249"/>
    </location>
</feature>
<feature type="helix" evidence="22">
    <location>
        <begin position="1253"/>
        <end position="1257"/>
    </location>
</feature>
<feature type="helix" evidence="22">
    <location>
        <begin position="1258"/>
        <end position="1260"/>
    </location>
</feature>
<feature type="helix" evidence="22">
    <location>
        <begin position="1268"/>
        <end position="1284"/>
    </location>
</feature>
<feature type="helix" evidence="22">
    <location>
        <begin position="1289"/>
        <end position="1306"/>
    </location>
</feature>
<feature type="helix" evidence="22">
    <location>
        <begin position="1318"/>
        <end position="1320"/>
    </location>
</feature>
<feature type="helix" evidence="22">
    <location>
        <begin position="1326"/>
        <end position="1328"/>
    </location>
</feature>
<feature type="turn" evidence="22">
    <location>
        <begin position="1331"/>
        <end position="1334"/>
    </location>
</feature>
<feature type="helix" evidence="22">
    <location>
        <begin position="1341"/>
        <end position="1347"/>
    </location>
</feature>
<feature type="helix" evidence="22">
    <location>
        <begin position="1348"/>
        <end position="1350"/>
    </location>
</feature>
<feature type="helix" evidence="22">
    <location>
        <begin position="1351"/>
        <end position="1364"/>
    </location>
</feature>
<feature type="helix" evidence="22">
    <location>
        <begin position="1367"/>
        <end position="1369"/>
    </location>
</feature>
<feature type="strand" evidence="27">
    <location>
        <begin position="1370"/>
        <end position="1372"/>
    </location>
</feature>
<feature type="helix" evidence="22">
    <location>
        <begin position="1374"/>
        <end position="1379"/>
    </location>
</feature>
<feature type="helix" evidence="22">
    <location>
        <begin position="1380"/>
        <end position="1383"/>
    </location>
</feature>
<feature type="helix" evidence="22">
    <location>
        <begin position="1386"/>
        <end position="1388"/>
    </location>
</feature>
<feature type="helix" evidence="22">
    <location>
        <begin position="1391"/>
        <end position="1402"/>
    </location>
</feature>
<feature type="turn" evidence="21">
    <location>
        <begin position="1403"/>
        <end position="1405"/>
    </location>
</feature>
<feature type="helix" evidence="28">
    <location>
        <begin position="1419"/>
        <end position="1421"/>
    </location>
</feature>
<feature type="helix" evidence="27">
    <location>
        <begin position="1435"/>
        <end position="1439"/>
    </location>
</feature>
<feature type="helix" evidence="22">
    <location>
        <begin position="1442"/>
        <end position="1452"/>
    </location>
</feature>
<feature type="strand" evidence="27">
    <location>
        <begin position="1453"/>
        <end position="1455"/>
    </location>
</feature>
<feature type="helix" evidence="22">
    <location>
        <begin position="1456"/>
        <end position="1466"/>
    </location>
</feature>
<feature type="helix" evidence="22">
    <location>
        <begin position="1468"/>
        <end position="1471"/>
    </location>
</feature>
<feature type="helix" evidence="22">
    <location>
        <begin position="1478"/>
        <end position="1488"/>
    </location>
</feature>
<feature type="helix" evidence="22">
    <location>
        <begin position="1492"/>
        <end position="1497"/>
    </location>
</feature>
<feature type="helix" evidence="22">
    <location>
        <begin position="1503"/>
        <end position="1512"/>
    </location>
</feature>
<feature type="strand" evidence="22">
    <location>
        <begin position="1514"/>
        <end position="1516"/>
    </location>
</feature>
<feature type="helix" evidence="22">
    <location>
        <begin position="1521"/>
        <end position="1525"/>
    </location>
</feature>
<feature type="helix" evidence="22">
    <location>
        <begin position="1526"/>
        <end position="1528"/>
    </location>
</feature>
<feature type="helix" evidence="22">
    <location>
        <begin position="1549"/>
        <end position="1561"/>
    </location>
</feature>
<feature type="helix" evidence="22">
    <location>
        <begin position="1567"/>
        <end position="1577"/>
    </location>
</feature>
<feature type="turn" evidence="22">
    <location>
        <begin position="1578"/>
        <end position="1580"/>
    </location>
</feature>
<feature type="helix" evidence="22">
    <location>
        <begin position="1582"/>
        <end position="1593"/>
    </location>
</feature>
<feature type="strand" evidence="22">
    <location>
        <begin position="1594"/>
        <end position="1600"/>
    </location>
</feature>
<feature type="strand" evidence="22">
    <location>
        <begin position="1606"/>
        <end position="1609"/>
    </location>
</feature>
<feature type="helix" evidence="27">
    <location>
        <begin position="1613"/>
        <end position="1616"/>
    </location>
</feature>
<feature type="helix" evidence="22">
    <location>
        <begin position="1623"/>
        <end position="1630"/>
    </location>
</feature>
<feature type="strand" evidence="24">
    <location>
        <begin position="1631"/>
        <end position="1634"/>
    </location>
</feature>
<feature type="helix" evidence="22">
    <location>
        <begin position="1644"/>
        <end position="1658"/>
    </location>
</feature>
<feature type="helix" evidence="22">
    <location>
        <begin position="1662"/>
        <end position="1676"/>
    </location>
</feature>
<feature type="helix" evidence="22">
    <location>
        <begin position="1681"/>
        <end position="1699"/>
    </location>
</feature>
<feature type="strand" evidence="22">
    <location>
        <begin position="1708"/>
        <end position="1713"/>
    </location>
</feature>
<feature type="helix" evidence="22">
    <location>
        <begin position="1718"/>
        <end position="1728"/>
    </location>
</feature>
<feature type="strand" evidence="22">
    <location>
        <begin position="1735"/>
        <end position="1742"/>
    </location>
</feature>
<feature type="turn" evidence="25">
    <location>
        <begin position="1749"/>
        <end position="1752"/>
    </location>
</feature>
<feature type="helix" evidence="28">
    <location>
        <begin position="1761"/>
        <end position="1778"/>
    </location>
</feature>
<feature type="helix" evidence="28">
    <location>
        <begin position="1783"/>
        <end position="1794"/>
    </location>
</feature>
<feature type="helix" evidence="28">
    <location>
        <begin position="1802"/>
        <end position="1810"/>
    </location>
</feature>
<feature type="helix" evidence="24">
    <location>
        <begin position="1815"/>
        <end position="1818"/>
    </location>
</feature>
<feature type="helix" evidence="28">
    <location>
        <begin position="1819"/>
        <end position="1824"/>
    </location>
</feature>
<feature type="helix" evidence="28">
    <location>
        <begin position="1831"/>
        <end position="1839"/>
    </location>
</feature>
<feature type="strand" evidence="25">
    <location>
        <begin position="1844"/>
        <end position="1849"/>
    </location>
</feature>
<feature type="turn" evidence="25">
    <location>
        <begin position="1854"/>
        <end position="1857"/>
    </location>
</feature>
<feature type="strand" evidence="24">
    <location>
        <begin position="1862"/>
        <end position="1867"/>
    </location>
</feature>
<feature type="strand" evidence="24">
    <location>
        <begin position="1870"/>
        <end position="1876"/>
    </location>
</feature>
<feature type="strand" evidence="24">
    <location>
        <begin position="1881"/>
        <end position="1890"/>
    </location>
</feature>
<feature type="helix" evidence="24">
    <location>
        <begin position="1893"/>
        <end position="1903"/>
    </location>
</feature>
<feature type="strand" evidence="23">
    <location>
        <begin position="1905"/>
        <end position="1907"/>
    </location>
</feature>
<feature type="strand" evidence="25">
    <location>
        <begin position="1912"/>
        <end position="1915"/>
    </location>
</feature>
<feature type="strand" evidence="24">
    <location>
        <begin position="1925"/>
        <end position="1927"/>
    </location>
</feature>
<feature type="strand" evidence="24">
    <location>
        <begin position="1930"/>
        <end position="1932"/>
    </location>
</feature>
<feature type="turn" evidence="24">
    <location>
        <begin position="1933"/>
        <end position="1935"/>
    </location>
</feature>
<feature type="strand" evidence="24">
    <location>
        <begin position="1936"/>
        <end position="1938"/>
    </location>
</feature>
<feature type="strand" evidence="24">
    <location>
        <begin position="1941"/>
        <end position="1943"/>
    </location>
</feature>
<feature type="helix" evidence="24">
    <location>
        <begin position="1944"/>
        <end position="1954"/>
    </location>
</feature>
<feature type="strand" evidence="24">
    <location>
        <begin position="1956"/>
        <end position="1960"/>
    </location>
</feature>
<feature type="strand" evidence="24">
    <location>
        <begin position="1968"/>
        <end position="1975"/>
    </location>
</feature>
<feature type="helix" evidence="28">
    <location>
        <begin position="1984"/>
        <end position="1990"/>
    </location>
</feature>
<feature type="turn" evidence="24">
    <location>
        <begin position="1991"/>
        <end position="1993"/>
    </location>
</feature>
<feature type="strand" evidence="28">
    <location>
        <begin position="1997"/>
        <end position="2000"/>
    </location>
</feature>
<feature type="strand" evidence="28">
    <location>
        <begin position="2002"/>
        <end position="2005"/>
    </location>
</feature>
<feature type="strand" evidence="23">
    <location>
        <begin position="2007"/>
        <end position="2009"/>
    </location>
</feature>
<feature type="helix" evidence="28">
    <location>
        <begin position="2015"/>
        <end position="2020"/>
    </location>
</feature>
<feature type="helix" evidence="28">
    <location>
        <begin position="2033"/>
        <end position="2038"/>
    </location>
</feature>
<feature type="strand" evidence="24">
    <location>
        <begin position="2040"/>
        <end position="2042"/>
    </location>
</feature>
<feature type="helix" evidence="28">
    <location>
        <begin position="2047"/>
        <end position="2051"/>
    </location>
</feature>
<feature type="helix" evidence="28">
    <location>
        <begin position="2055"/>
        <end position="2058"/>
    </location>
</feature>
<feature type="helix" evidence="28">
    <location>
        <begin position="2059"/>
        <end position="2061"/>
    </location>
</feature>
<feature type="helix" evidence="28">
    <location>
        <begin position="2070"/>
        <end position="2073"/>
    </location>
</feature>
<feature type="strand" evidence="24">
    <location>
        <begin position="2083"/>
        <end position="2085"/>
    </location>
</feature>
<feature type="strand" evidence="27">
    <location>
        <begin position="2087"/>
        <end position="2090"/>
    </location>
</feature>
<feature type="strand" evidence="27">
    <location>
        <begin position="2092"/>
        <end position="2094"/>
    </location>
</feature>
<feature type="strand" evidence="27">
    <location>
        <begin position="2096"/>
        <end position="2099"/>
    </location>
</feature>
<feature type="strand" evidence="24">
    <location>
        <begin position="2101"/>
        <end position="2103"/>
    </location>
</feature>
<feature type="helix" evidence="28">
    <location>
        <begin position="2110"/>
        <end position="2128"/>
    </location>
</feature>
<feature type="strand" evidence="28">
    <location>
        <begin position="2132"/>
        <end position="2134"/>
    </location>
</feature>
<feature type="strand" evidence="24">
    <location>
        <begin position="2136"/>
        <end position="2138"/>
    </location>
</feature>
<feature type="helix" evidence="28">
    <location>
        <begin position="2139"/>
        <end position="2154"/>
    </location>
</feature>
<feature type="helix" evidence="28">
    <location>
        <begin position="2159"/>
        <end position="2175"/>
    </location>
</feature>
<feature type="helix" evidence="28">
    <location>
        <begin position="2178"/>
        <end position="2182"/>
    </location>
</feature>
<feature type="turn" evidence="26">
    <location>
        <begin position="2188"/>
        <end position="2190"/>
    </location>
</feature>
<feature type="strand" evidence="24">
    <location>
        <begin position="2192"/>
        <end position="2196"/>
    </location>
</feature>
<feature type="helix" evidence="28">
    <location>
        <begin position="2201"/>
        <end position="2209"/>
    </location>
</feature>
<feature type="helix" evidence="28">
    <location>
        <begin position="2217"/>
        <end position="2237"/>
    </location>
</feature>
<feature type="helix" evidence="24">
    <location>
        <begin position="2246"/>
        <end position="2250"/>
    </location>
</feature>
<organism>
    <name type="scientific">Bunyavirus La Crosse</name>
    <dbReference type="NCBI Taxonomy" id="11577"/>
    <lineage>
        <taxon>Viruses</taxon>
        <taxon>Riboviria</taxon>
        <taxon>Orthornavirae</taxon>
        <taxon>Negarnaviricota</taxon>
        <taxon>Polyploviricotina</taxon>
        <taxon>Ellioviricetes</taxon>
        <taxon>Bunyavirales</taxon>
        <taxon>Peribunyaviridae</taxon>
        <taxon>Orthobunyavirus</taxon>
        <taxon>Orthobunyavirus lacrosseense</taxon>
    </lineage>
</organism>
<sequence>MDYQEYQQFLARINTARDACVAKDIDVDLLMARHDYFGRELCKSLNIEYRNDVPFIDIILDIRPEVDPLTIDAPHITPDNYLYINNVLYIIDYKVSVSNESSVITYDKYYELTRDISDRLSIPIEIVIIRIDPVSRDLHINSDRFKELYPTIVVDINFNQFFDLKQLLYEKFGDDEEFLLKVAHGDFTLTAPWCKTGCPEFWKHPIYKEFKMSMPVPERRLFEESVKFNAYESERWNTNLVKIREYTKKDYSEHISKSAKNIFLASGFYKQPNKNEISEGWTLMVERVQDQREISKSLHDQKPSIHFIWGAHNPGNSNNATFKLILLSKSLQSIKGISTYTEAFKSLGKMMDIGDKAIEYEEFCMSLKSKARSSWKQIMNKKLEPKQINNALVLWEQQFMINNDLIDKSEKLKLFKNFCGIGKHKQFKNKMLEDLEVSKPKILDFDDANMYLASLTMMEQSKKILSKSNGLKPDNFILNEFGSRIKDANKETYDNMHKIFETGYWQCISDFSTLMKNILSVSQYNRHNTFRIAMCANNNVFAIVFPSADIKTKKATVVYSIIVLHKEEENIFNPGCLHGTFKCMNGYISISRAIRLDKERCQRIVSSPGLFLTTCLLFKHDNPTLVMSDIMNFSIYTSLSITKSVLSLTEPARYMIMNSLAISSNVKDYIAEKFSPYTKTLFSVYMTRLIKNACFDAYDQRQRVQLRDIYLSDYDITQKGIKDNRELTSIWFPGSVTLKEYLTQIYLPFYFNAKGLHEKHHVMVDLAKTILEIECEQRENIKEIWSTNCTKQTVNLKILIHSLCKNLLADTSRHNHLRNRIENRNNFRRSITTISTFTSSKSCLKIGDFRKEKELQSVKQKKILEVQSRKMRLANPMFVTDEQVCLEVGHCNYEMLRNAMPNYTDYISTKVFDRLYELLDKKVLTDKPVIEQIMDMMIDHKKFYFTFFNKGQKTSKDREIFVGEYEAKMCMYAVERIAKERCKLNPDEMISEPGDGKLKVLEQKSEQEIRFLVETTRQKNREIDEAIEALATEGYESNLGKIEKLSLGKAKGLKMEINADMSKWSAQDVFYKYFWLIALDPILYPQEKERILYFMCNYMDKELILPDELLFNLLDQKVAYQNDIIATMTNQLNSNTVLIKRNWLQGNFNYTSSYVHSCAMSVYKEILKEAITLLDGSILVNSLVHSDDNQTSITIVQDKMENDKIIDFAMKEFERACLTFGCQANMKKTYVTNCIKEFVSLFNLYGEPFSIYGRFLLTSVGDCAYIGPYEDLASRISSAQTAIKHGCPPSLAWVSIAISHWMTSLTYNMLPGQSNDPIDYFPAENRKDIPIELNGVLDAPLSMISTVGLESGNLYFLIKLLSKYTPVMQKRESVVNQIAEVKNWKVEDLTDNEIFRLKILRYLVLDAEMDPSDIMGETSDMRGRSILTPRKFTTAGSLRKLYSFSKYQDRLSSPGGMVELFTYLLEKPELLVTKGEDMKDYMESVIFRYNSKRFKESLSIQNPAQLFIEQILFSHKPVIDFSGIRDKYINLHDSRALEKEPDILGKVTFTEAYRLLMRDLSSLELTNDDIQVIYSYIILNDPMMITIANTHILSIYGSPQRRMGMSCSTMPEFRNLKLIHHSPALVLRAYSKNNPDIQGADPTEMARDLVHLKEFVENTNLEEKMKVRIAMNEAEKGQRDIVFELKEMTRFYQVCYEYVKSTEHKIKVFILPAKSYTTTDFCSLMQGNLIKDKEWYTVHYLKQILSGGHKAIMQHNATSEQNIAFECFKLITHFADSFIDSLSRSAFLQLIIDEFSYKDVKVSKLYDIIKNGYNRTDFIPLLFRTGDLRQADLDKYDAMKSHERVTWNDWQTSRHLDMGSINLTITGYNRSITIIGEDNKLTYAELCLTRKTPENITISGRKLLGSRHGLKFENMSKIQTYPGNYYITYRKKDRHQFVYQIHSHESITRRNEEHMAIRTRIYNEITPVCVVNVAEVDGDQRILIRSLDYLNNDIFSLSRIKVGLDEFATIKKAHFSKMVSFEGPPIKTGLLDLTELMKSQDLLNLNYDNIRNSNLISFSKLICCEGSDNINDGLEFLSDDPMNFTEGEAIHSTPIFNIYYSKRGERHMTYRNAIKLLIERETKIFEEAFTFSENGFISPENLGCLEAVVSLIKLLKTNEWSTVIDKCIHICLIKNGMDHMYHSFDVPKCFMGNPITRDINWVMFREFINSLPGTDIPPWNVMTENFKKKCIALINSKFETQRDFSEFTKLMKKEGGRSNIEFD</sequence>
<organismHost>
    <name type="scientific">Cervidae</name>
    <name type="common">Deer</name>
    <dbReference type="NCBI Taxonomy" id="9850"/>
</organismHost>
<organismHost>
    <name type="scientific">Homo sapiens</name>
    <name type="common">Human</name>
    <dbReference type="NCBI Taxonomy" id="9606"/>
</organismHost>
<organismHost>
    <name type="scientific">Ochlerotatus triseriatus</name>
    <name type="common">Eastern treehole mosquito</name>
    <name type="synonym">Aedes triseriatus</name>
    <dbReference type="NCBI Taxonomy" id="7162"/>
</organismHost>
<organismHost>
    <name type="scientific">Tamias</name>
    <dbReference type="NCBI Taxonomy" id="13712"/>
</organismHost>
<reference key="1">
    <citation type="journal article" date="2007" name="Virol. J.">
        <title>Genome sequence analysis of La Crosse virus and in vitro and in vivo phenotypes.</title>
        <authorList>
            <person name="Bennett R.S."/>
            <person name="Ton D.R."/>
            <person name="Hanson C.T."/>
            <person name="Murphy B.R."/>
            <person name="Whitehead S.S."/>
        </authorList>
    </citation>
    <scope>NUCLEOTIDE SEQUENCE [LARGE SCALE GENOMIC DNA]</scope>
</reference>
<reference key="2">
    <citation type="journal article" date="2017" name="Crit. Rev. Microbiol.">
        <title>Bunyaviridae RdRps: structure, motifs, and RNA synthesis machinery.</title>
        <authorList>
            <person name="Amroun A."/>
            <person name="Priet S."/>
            <person name="de Lamballerie X."/>
            <person name="Querat G."/>
        </authorList>
    </citation>
    <scope>REVIEW</scope>
</reference>
<reference key="3">
    <citation type="journal article" date="2020" name="Trends Microbiol.">
        <title>The Cap-Snatching Mechanism of Bunyaviruses.</title>
        <authorList>
            <person name="Olschewski S."/>
            <person name="Cusack S."/>
            <person name="Rosenthal M."/>
        </authorList>
    </citation>
    <scope>REVIEW</scope>
</reference>
<reference evidence="13 14" key="4">
    <citation type="journal article" date="2010" name="PLoS Pathog.">
        <title>Bunyaviridae RNA polymerases (L-protein) have an N-terminal, influenza-like endonuclease domain, essential for viral cap-dependent transcription.</title>
        <authorList>
            <person name="Reguera J."/>
            <person name="Weber F."/>
            <person name="Cusack S."/>
        </authorList>
    </citation>
    <scope>X-RAY CRYSTALLOGRAPHY (2.20 ANGSTROMS) OF 1-183 IN COMPLEX WITH MANGANESE</scope>
    <scope>DISULFIDE BONDS</scope>
    <scope>FUNCTION</scope>
    <scope>MUTAGENESIS OF HIS-34; ASP-52; ASP-79; ASP-92 AND LYS-94</scope>
    <scope>DOMAIN</scope>
    <scope>CATALYTIC ACTIVITY</scope>
</reference>
<reference evidence="15 16" key="5">
    <citation type="journal article" date="2015" name="Cell">
        <title>Structural insights into bunyavirus replication and its regulation by the vRNA promoter.</title>
        <authorList>
            <person name="Gerlach P."/>
            <person name="Malet H."/>
            <person name="Cusack S."/>
            <person name="Reguera J."/>
        </authorList>
    </citation>
    <scope>X-RAY CRYSTALLOGRAPHY (2.57 ANGSTROMS)</scope>
    <scope>RNA-BINDING</scope>
    <scope>DOMAIN</scope>
    <scope>FUNCTION</scope>
</reference>
<reference evidence="17 18 19" key="6">
    <citation type="journal article" date="2020" name="Nat. Commun.">
        <title>Pre-initiation and elongation structures of full-length La Crosse virus polymerase reveal functionally important conformational changes.</title>
        <authorList>
            <person name="Arragain B."/>
            <person name="Effantin G."/>
            <person name="Gerlach P."/>
            <person name="Reguera J."/>
            <person name="Schoehn G."/>
            <person name="Cusack S."/>
            <person name="Malet H."/>
        </authorList>
    </citation>
    <scope>STRUCTURE BY ELECTRON MICROSCOPY (3.02 ANGSTROMS) IN COMPLEX WITH ZINC</scope>
    <scope>DOMAIN</scope>
</reference>
<dbReference type="EC" id="2.7.7.48" evidence="2"/>
<dbReference type="EC" id="3.1.-.-" evidence="6"/>
<dbReference type="EMBL" id="EF485038">
    <property type="protein sequence ID" value="ABQ12639.1"/>
    <property type="molecule type" value="Viral_cRNA"/>
</dbReference>
<dbReference type="PDB" id="2XI5">
    <property type="method" value="X-ray"/>
    <property type="resolution" value="2.20 A"/>
    <property type="chains" value="A/B/C/D=1-183"/>
</dbReference>
<dbReference type="PDB" id="2XI7">
    <property type="method" value="X-ray"/>
    <property type="resolution" value="2.20 A"/>
    <property type="chains" value="A/B/C/D=1-183"/>
</dbReference>
<dbReference type="PDB" id="5AMQ">
    <property type="method" value="X-ray"/>
    <property type="resolution" value="3.00 A"/>
    <property type="chains" value="A=1-2263"/>
</dbReference>
<dbReference type="PDB" id="5AMR">
    <property type="method" value="X-ray"/>
    <property type="resolution" value="2.57 A"/>
    <property type="chains" value="A=1-2263"/>
</dbReference>
<dbReference type="PDB" id="6Z6B">
    <property type="method" value="X-ray"/>
    <property type="resolution" value="3.96 A"/>
    <property type="chains" value="EEE/PPP=1-2263"/>
</dbReference>
<dbReference type="PDB" id="6Z6G">
    <property type="method" value="EM"/>
    <property type="resolution" value="3.06 A"/>
    <property type="chains" value="A=1-2263"/>
</dbReference>
<dbReference type="PDB" id="6Z8K">
    <property type="method" value="EM"/>
    <property type="resolution" value="3.02 A"/>
    <property type="chains" value="A=1-2263"/>
</dbReference>
<dbReference type="PDB" id="7OA4">
    <property type="method" value="X-ray"/>
    <property type="resolution" value="2.90 A"/>
    <property type="chains" value="AAA/BBB/DDD/GGG=1-183"/>
</dbReference>
<dbReference type="PDB" id="7ORI">
    <property type="method" value="EM"/>
    <property type="resolution" value="3.90 A"/>
    <property type="chains" value="A=1-2263"/>
</dbReference>
<dbReference type="PDB" id="7ORJ">
    <property type="method" value="EM"/>
    <property type="resolution" value="3.90 A"/>
    <property type="chains" value="A=1-2263"/>
</dbReference>
<dbReference type="PDB" id="7ORK">
    <property type="method" value="EM"/>
    <property type="resolution" value="3.10 A"/>
    <property type="chains" value="A=1-2263"/>
</dbReference>
<dbReference type="PDB" id="7ORL">
    <property type="method" value="EM"/>
    <property type="resolution" value="3.60 A"/>
    <property type="chains" value="A=1-2263"/>
</dbReference>
<dbReference type="PDB" id="7ORM">
    <property type="method" value="EM"/>
    <property type="resolution" value="3.30 A"/>
    <property type="chains" value="A=1-2263"/>
</dbReference>
<dbReference type="PDB" id="7ORN">
    <property type="method" value="EM"/>
    <property type="resolution" value="2.80 A"/>
    <property type="chains" value="A=1-2263"/>
</dbReference>
<dbReference type="PDB" id="7ORO">
    <property type="method" value="EM"/>
    <property type="resolution" value="2.90 A"/>
    <property type="chains" value="A=1-2263"/>
</dbReference>
<dbReference type="PDB" id="7PLR">
    <property type="method" value="X-ray"/>
    <property type="resolution" value="2.64 A"/>
    <property type="chains" value="AAA/BBB/DDD/GGG=1-183"/>
</dbReference>
<dbReference type="PDBsum" id="2XI5"/>
<dbReference type="PDBsum" id="2XI7"/>
<dbReference type="PDBsum" id="5AMQ"/>
<dbReference type="PDBsum" id="5AMR"/>
<dbReference type="PDBsum" id="6Z6B"/>
<dbReference type="PDBsum" id="6Z6G"/>
<dbReference type="PDBsum" id="6Z8K"/>
<dbReference type="PDBsum" id="7OA4"/>
<dbReference type="PDBsum" id="7ORI"/>
<dbReference type="PDBsum" id="7ORJ"/>
<dbReference type="PDBsum" id="7ORK"/>
<dbReference type="PDBsum" id="7ORL"/>
<dbReference type="PDBsum" id="7ORM"/>
<dbReference type="PDBsum" id="7ORN"/>
<dbReference type="PDBsum" id="7ORO"/>
<dbReference type="PDBsum" id="7PLR"/>
<dbReference type="EMDB" id="EMD-11093"/>
<dbReference type="EMDB" id="EMD-11118"/>
<dbReference type="EMDB" id="EMD-13038"/>
<dbReference type="EMDB" id="EMD-13039"/>
<dbReference type="EMDB" id="EMD-13040"/>
<dbReference type="EMDB" id="EMD-13041"/>
<dbReference type="EMDB" id="EMD-13042"/>
<dbReference type="EMDB" id="EMD-13043"/>
<dbReference type="EMDB" id="EMD-13044"/>
<dbReference type="EMDB" id="EMD-2930"/>
<dbReference type="SMR" id="A5HC98"/>
<dbReference type="EvolutionaryTrace" id="A5HC98"/>
<dbReference type="Proteomes" id="UP000126351">
    <property type="component" value="Genome"/>
</dbReference>
<dbReference type="GO" id="GO:0044165">
    <property type="term" value="C:host cell endoplasmic reticulum"/>
    <property type="evidence" value="ECO:0007669"/>
    <property type="project" value="UniProtKB-SubCell"/>
</dbReference>
<dbReference type="GO" id="GO:0044172">
    <property type="term" value="C:host cell endoplasmic reticulum-Golgi intermediate compartment"/>
    <property type="evidence" value="ECO:0007669"/>
    <property type="project" value="UniProtKB-SubCell"/>
</dbReference>
<dbReference type="GO" id="GO:0044177">
    <property type="term" value="C:host cell Golgi apparatus"/>
    <property type="evidence" value="ECO:0007669"/>
    <property type="project" value="UniProtKB-SubCell"/>
</dbReference>
<dbReference type="GO" id="GO:0044423">
    <property type="term" value="C:virion component"/>
    <property type="evidence" value="ECO:0007669"/>
    <property type="project" value="UniProtKB-KW"/>
</dbReference>
<dbReference type="GO" id="GO:0016787">
    <property type="term" value="F:hydrolase activity"/>
    <property type="evidence" value="ECO:0007669"/>
    <property type="project" value="UniProtKB-KW"/>
</dbReference>
<dbReference type="GO" id="GO:0046872">
    <property type="term" value="F:metal ion binding"/>
    <property type="evidence" value="ECO:0007669"/>
    <property type="project" value="UniProtKB-KW"/>
</dbReference>
<dbReference type="GO" id="GO:0000166">
    <property type="term" value="F:nucleotide binding"/>
    <property type="evidence" value="ECO:0007669"/>
    <property type="project" value="UniProtKB-KW"/>
</dbReference>
<dbReference type="GO" id="GO:0003723">
    <property type="term" value="F:RNA binding"/>
    <property type="evidence" value="ECO:0000269"/>
    <property type="project" value="DisProt"/>
</dbReference>
<dbReference type="GO" id="GO:0003968">
    <property type="term" value="F:RNA-directed RNA polymerase activity"/>
    <property type="evidence" value="ECO:0007669"/>
    <property type="project" value="UniProtKB-KW"/>
</dbReference>
<dbReference type="GO" id="GO:0006351">
    <property type="term" value="P:DNA-templated transcription"/>
    <property type="evidence" value="ECO:0007669"/>
    <property type="project" value="InterPro"/>
</dbReference>
<dbReference type="GO" id="GO:0039694">
    <property type="term" value="P:viral RNA genome replication"/>
    <property type="evidence" value="ECO:0007669"/>
    <property type="project" value="InterPro"/>
</dbReference>
<dbReference type="CDD" id="cd22349">
    <property type="entry name" value="PDDEXK_RNA_polymerase-like"/>
    <property type="match status" value="1"/>
</dbReference>
<dbReference type="DisProt" id="DP02521"/>
<dbReference type="FunFam" id="3.40.91.60:FF:000001">
    <property type="entry name" value="RNA-directed RNA polymerase L"/>
    <property type="match status" value="1"/>
</dbReference>
<dbReference type="Gene3D" id="3.40.91.60">
    <property type="match status" value="1"/>
</dbReference>
<dbReference type="InterPro" id="IPR048006">
    <property type="entry name" value="CapSnatch_bunyavir"/>
</dbReference>
<dbReference type="InterPro" id="IPR029124">
    <property type="entry name" value="L_protein_N"/>
</dbReference>
<dbReference type="InterPro" id="IPR048547">
    <property type="entry name" value="L_thumb_ring_bunyavir"/>
</dbReference>
<dbReference type="InterPro" id="IPR007099">
    <property type="entry name" value="RNA-dir_pol_NSvirus"/>
</dbReference>
<dbReference type="InterPro" id="IPR014384">
    <property type="entry name" value="RNA-dir_pol_orthobunyavirus"/>
</dbReference>
<dbReference type="InterPro" id="IPR007322">
    <property type="entry name" value="RNA_pol_bunyavir"/>
</dbReference>
<dbReference type="NCBIfam" id="TIGR04202">
    <property type="entry name" value="capSnatchArena"/>
    <property type="match status" value="1"/>
</dbReference>
<dbReference type="Pfam" id="PF04196">
    <property type="entry name" value="Bunya_RdRp"/>
    <property type="match status" value="1"/>
</dbReference>
<dbReference type="Pfam" id="PF15518">
    <property type="entry name" value="L_protein_N"/>
    <property type="match status" value="1"/>
</dbReference>
<dbReference type="Pfam" id="PF21561">
    <property type="entry name" value="L_thumb_ring_vir"/>
    <property type="match status" value="1"/>
</dbReference>
<dbReference type="PIRSF" id="PIRSF000824">
    <property type="entry name" value="L_OrthobunV"/>
    <property type="match status" value="1"/>
</dbReference>
<dbReference type="PROSITE" id="PS50525">
    <property type="entry name" value="RDRP_SSRNA_NEG_SEG"/>
    <property type="match status" value="1"/>
</dbReference>
<gene>
    <name type="primary">L</name>
</gene>